<gene>
    <name type="primary">ugpE</name>
    <name type="ordered locus">c4240</name>
</gene>
<comment type="function">
    <text evidence="1">Part of the ABC transporter complex UgpBAEC involved in sn-glycerol-3-phosphate (G3P) import. Probably responsible for the translocation of the substrate across the membrane.</text>
</comment>
<comment type="subunit">
    <text evidence="1">The complex is composed of two ATP-binding proteins (UgpC), two transmembrane proteins (UgpA and UgpE) and a solute-binding protein (UgpB).</text>
</comment>
<comment type="subcellular location">
    <subcellularLocation>
        <location evidence="1">Cell inner membrane</location>
        <topology evidence="2">Multi-pass membrane protein</topology>
    </subcellularLocation>
</comment>
<comment type="similarity">
    <text evidence="4">Belongs to the binding-protein-dependent transport system permease family. UgpAE subfamily.</text>
</comment>
<protein>
    <recommendedName>
        <fullName evidence="1">sn-glycerol-3-phosphate transport system permease protein UgpE</fullName>
    </recommendedName>
</protein>
<organism>
    <name type="scientific">Escherichia coli O6:H1 (strain CFT073 / ATCC 700928 / UPEC)</name>
    <dbReference type="NCBI Taxonomy" id="199310"/>
    <lineage>
        <taxon>Bacteria</taxon>
        <taxon>Pseudomonadati</taxon>
        <taxon>Pseudomonadota</taxon>
        <taxon>Gammaproteobacteria</taxon>
        <taxon>Enterobacterales</taxon>
        <taxon>Enterobacteriaceae</taxon>
        <taxon>Escherichia</taxon>
    </lineage>
</organism>
<proteinExistence type="inferred from homology"/>
<feature type="chain" id="PRO_0000292678" description="sn-glycerol-3-phosphate transport system permease protein UgpE">
    <location>
        <begin position="1"/>
        <end position="281"/>
    </location>
</feature>
<feature type="transmembrane region" description="Helical" evidence="3">
    <location>
        <begin position="16"/>
        <end position="36"/>
    </location>
</feature>
<feature type="transmembrane region" description="Helical" evidence="3">
    <location>
        <begin position="85"/>
        <end position="105"/>
    </location>
</feature>
<feature type="transmembrane region" description="Helical" evidence="3">
    <location>
        <begin position="113"/>
        <end position="133"/>
    </location>
</feature>
<feature type="transmembrane region" description="Helical" evidence="3">
    <location>
        <begin position="142"/>
        <end position="162"/>
    </location>
</feature>
<feature type="transmembrane region" description="Helical" evidence="3">
    <location>
        <begin position="202"/>
        <end position="222"/>
    </location>
</feature>
<feature type="transmembrane region" description="Helical" evidence="3">
    <location>
        <begin position="247"/>
        <end position="267"/>
    </location>
</feature>
<feature type="domain" description="ABC transmembrane type-1" evidence="3">
    <location>
        <begin position="77"/>
        <end position="268"/>
    </location>
</feature>
<sequence length="281" mass="31530">MIENRPWLTIFSHTMLILGIAVILFPLYVAFVAATLDKQEVYAAPMTLIPGTHLLENIHNIWVNGVGTNSAPFWRMLLNSFVMAFSITLGKITVSMLSAFAIVWFRFPLRNLFFWMIFITLMLPVEVRIFPTVEVIANLKMLDSYAGLTLPLMASATATFLFRQFFMTLPDELVEAARIDGASPMRFFCDIVFPLSKTNLAALFVITFIYGWNQYLWPLLIITDVDLGTTVAGIKGMIATGEGTTEWNSVMAAMLLTLIPPVVIVLVMQRAFVRGLVDSEK</sequence>
<keyword id="KW-0997">Cell inner membrane</keyword>
<keyword id="KW-1003">Cell membrane</keyword>
<keyword id="KW-0472">Membrane</keyword>
<keyword id="KW-1185">Reference proteome</keyword>
<keyword id="KW-0812">Transmembrane</keyword>
<keyword id="KW-1133">Transmembrane helix</keyword>
<keyword id="KW-0813">Transport</keyword>
<evidence type="ECO:0000250" key="1">
    <source>
        <dbReference type="UniProtKB" id="P10906"/>
    </source>
</evidence>
<evidence type="ECO:0000255" key="2"/>
<evidence type="ECO:0000255" key="3">
    <source>
        <dbReference type="PROSITE-ProRule" id="PRU00441"/>
    </source>
</evidence>
<evidence type="ECO:0000305" key="4"/>
<dbReference type="EMBL" id="AE014075">
    <property type="protein sequence ID" value="AAN82676.1"/>
    <property type="molecule type" value="Genomic_DNA"/>
</dbReference>
<dbReference type="RefSeq" id="WP_000572183.1">
    <property type="nucleotide sequence ID" value="NZ_CP051263.1"/>
</dbReference>
<dbReference type="SMR" id="Q8FCQ1"/>
<dbReference type="STRING" id="199310.c4240"/>
<dbReference type="GeneID" id="89518281"/>
<dbReference type="KEGG" id="ecc:c4240"/>
<dbReference type="eggNOG" id="COG0395">
    <property type="taxonomic scope" value="Bacteria"/>
</dbReference>
<dbReference type="HOGENOM" id="CLU_016047_1_1_6"/>
<dbReference type="BioCyc" id="ECOL199310:C4240-MONOMER"/>
<dbReference type="Proteomes" id="UP000001410">
    <property type="component" value="Chromosome"/>
</dbReference>
<dbReference type="GO" id="GO:0005886">
    <property type="term" value="C:plasma membrane"/>
    <property type="evidence" value="ECO:0007669"/>
    <property type="project" value="UniProtKB-SubCell"/>
</dbReference>
<dbReference type="GO" id="GO:0055085">
    <property type="term" value="P:transmembrane transport"/>
    <property type="evidence" value="ECO:0007669"/>
    <property type="project" value="InterPro"/>
</dbReference>
<dbReference type="CDD" id="cd06261">
    <property type="entry name" value="TM_PBP2"/>
    <property type="match status" value="1"/>
</dbReference>
<dbReference type="FunFam" id="1.10.3720.10:FF:000042">
    <property type="entry name" value="sn-glycerol-3-phosphate transport system permease protein UgpE"/>
    <property type="match status" value="1"/>
</dbReference>
<dbReference type="Gene3D" id="1.10.3720.10">
    <property type="entry name" value="MetI-like"/>
    <property type="match status" value="1"/>
</dbReference>
<dbReference type="InterPro" id="IPR000515">
    <property type="entry name" value="MetI-like"/>
</dbReference>
<dbReference type="InterPro" id="IPR035906">
    <property type="entry name" value="MetI-like_sf"/>
</dbReference>
<dbReference type="NCBIfam" id="NF008210">
    <property type="entry name" value="PRK10973.1"/>
    <property type="match status" value="1"/>
</dbReference>
<dbReference type="PANTHER" id="PTHR43744">
    <property type="entry name" value="ABC TRANSPORTER PERMEASE PROTEIN MG189-RELATED-RELATED"/>
    <property type="match status" value="1"/>
</dbReference>
<dbReference type="PANTHER" id="PTHR43744:SF8">
    <property type="entry name" value="SN-GLYCEROL-3-PHOSPHATE TRANSPORT SYSTEM PERMEASE PROTEIN UGPE"/>
    <property type="match status" value="1"/>
</dbReference>
<dbReference type="Pfam" id="PF00528">
    <property type="entry name" value="BPD_transp_1"/>
    <property type="match status" value="1"/>
</dbReference>
<dbReference type="SUPFAM" id="SSF161098">
    <property type="entry name" value="MetI-like"/>
    <property type="match status" value="1"/>
</dbReference>
<dbReference type="PROSITE" id="PS50928">
    <property type="entry name" value="ABC_TM1"/>
    <property type="match status" value="1"/>
</dbReference>
<name>UGPE_ECOL6</name>
<accession>Q8FCQ1</accession>
<reference key="1">
    <citation type="journal article" date="2002" name="Proc. Natl. Acad. Sci. U.S.A.">
        <title>Extensive mosaic structure revealed by the complete genome sequence of uropathogenic Escherichia coli.</title>
        <authorList>
            <person name="Welch R.A."/>
            <person name="Burland V."/>
            <person name="Plunkett G. III"/>
            <person name="Redford P."/>
            <person name="Roesch P."/>
            <person name="Rasko D."/>
            <person name="Buckles E.L."/>
            <person name="Liou S.-R."/>
            <person name="Boutin A."/>
            <person name="Hackett J."/>
            <person name="Stroud D."/>
            <person name="Mayhew G.F."/>
            <person name="Rose D.J."/>
            <person name="Zhou S."/>
            <person name="Schwartz D.C."/>
            <person name="Perna N.T."/>
            <person name="Mobley H.L.T."/>
            <person name="Donnenberg M.S."/>
            <person name="Blattner F.R."/>
        </authorList>
    </citation>
    <scope>NUCLEOTIDE SEQUENCE [LARGE SCALE GENOMIC DNA]</scope>
    <source>
        <strain>CFT073 / ATCC 700928 / UPEC</strain>
    </source>
</reference>